<keyword id="KW-0997">Cell inner membrane</keyword>
<keyword id="KW-1003">Cell membrane</keyword>
<keyword id="KW-0472">Membrane</keyword>
<keyword id="KW-0812">Transmembrane</keyword>
<keyword id="KW-1133">Transmembrane helix</keyword>
<feature type="chain" id="PRO_1000203986" description="Inner membrane-spanning protein YciB">
    <location>
        <begin position="1"/>
        <end position="180"/>
    </location>
</feature>
<feature type="transmembrane region" description="Helical" evidence="1">
    <location>
        <begin position="22"/>
        <end position="42"/>
    </location>
</feature>
<feature type="transmembrane region" description="Helical" evidence="1">
    <location>
        <begin position="50"/>
        <end position="70"/>
    </location>
</feature>
<feature type="transmembrane region" description="Helical" evidence="1">
    <location>
        <begin position="76"/>
        <end position="96"/>
    </location>
</feature>
<feature type="transmembrane region" description="Helical" evidence="1">
    <location>
        <begin position="121"/>
        <end position="141"/>
    </location>
</feature>
<feature type="transmembrane region" description="Helical" evidence="1">
    <location>
        <begin position="149"/>
        <end position="169"/>
    </location>
</feature>
<sequence length="180" mass="20657">MKQLLDFLPLVVFFVCYKLYDIYVASGALVAATAVALVLTWLKYRRVEKMTLITFIMVAIFGTLTLVFHNDLFIKWKVTVIYTLFALALLISQVVLKKPLIQRMLGKELQLPDSVWSRLNAAWALFFLGCGLANIYVAFWLPQSVWVDFKVFGLTALTLVFTLLSGIYIYRNMSEEQKHS</sequence>
<comment type="function">
    <text evidence="1">Plays a role in cell envelope biogenesis, maintenance of cell envelope integrity and membrane homeostasis.</text>
</comment>
<comment type="subcellular location">
    <subcellularLocation>
        <location evidence="1">Cell inner membrane</location>
        <topology evidence="1">Multi-pass membrane protein</topology>
    </subcellularLocation>
</comment>
<comment type="similarity">
    <text evidence="1">Belongs to the YciB family.</text>
</comment>
<protein>
    <recommendedName>
        <fullName evidence="1">Inner membrane-spanning protein YciB</fullName>
    </recommendedName>
</protein>
<proteinExistence type="inferred from homology"/>
<gene>
    <name evidence="1" type="primary">yciB</name>
    <name type="ordered locus">NT01EI_1681</name>
</gene>
<name>YCIB_EDWI9</name>
<dbReference type="EMBL" id="CP001600">
    <property type="protein sequence ID" value="ACR68862.1"/>
    <property type="molecule type" value="Genomic_DNA"/>
</dbReference>
<dbReference type="RefSeq" id="WP_015871018.1">
    <property type="nucleotide sequence ID" value="NZ_CP169062.1"/>
</dbReference>
<dbReference type="STRING" id="67780.B6E78_01595"/>
<dbReference type="KEGG" id="eic:NT01EI_1681"/>
<dbReference type="PATRIC" id="fig|634503.3.peg.1508"/>
<dbReference type="HOGENOM" id="CLU_089554_2_0_6"/>
<dbReference type="OrthoDB" id="9788219at2"/>
<dbReference type="Proteomes" id="UP000001485">
    <property type="component" value="Chromosome"/>
</dbReference>
<dbReference type="GO" id="GO:0005886">
    <property type="term" value="C:plasma membrane"/>
    <property type="evidence" value="ECO:0007669"/>
    <property type="project" value="UniProtKB-SubCell"/>
</dbReference>
<dbReference type="HAMAP" id="MF_00189">
    <property type="entry name" value="YciB"/>
    <property type="match status" value="1"/>
</dbReference>
<dbReference type="InterPro" id="IPR006008">
    <property type="entry name" value="YciB"/>
</dbReference>
<dbReference type="NCBIfam" id="TIGR00997">
    <property type="entry name" value="ispZ"/>
    <property type="match status" value="1"/>
</dbReference>
<dbReference type="NCBIfam" id="NF001324">
    <property type="entry name" value="PRK00259.1-2"/>
    <property type="match status" value="1"/>
</dbReference>
<dbReference type="NCBIfam" id="NF001325">
    <property type="entry name" value="PRK00259.1-3"/>
    <property type="match status" value="1"/>
</dbReference>
<dbReference type="NCBIfam" id="NF001326">
    <property type="entry name" value="PRK00259.1-4"/>
    <property type="match status" value="1"/>
</dbReference>
<dbReference type="PANTHER" id="PTHR36917:SF1">
    <property type="entry name" value="INNER MEMBRANE-SPANNING PROTEIN YCIB"/>
    <property type="match status" value="1"/>
</dbReference>
<dbReference type="PANTHER" id="PTHR36917">
    <property type="entry name" value="INTRACELLULAR SEPTATION PROTEIN A-RELATED"/>
    <property type="match status" value="1"/>
</dbReference>
<dbReference type="Pfam" id="PF04279">
    <property type="entry name" value="IspA"/>
    <property type="match status" value="1"/>
</dbReference>
<reference key="1">
    <citation type="submission" date="2009-03" db="EMBL/GenBank/DDBJ databases">
        <title>Complete genome sequence of Edwardsiella ictaluri 93-146.</title>
        <authorList>
            <person name="Williams M.L."/>
            <person name="Gillaspy A.F."/>
            <person name="Dyer D.W."/>
            <person name="Thune R.L."/>
            <person name="Waldbieser G.C."/>
            <person name="Schuster S.C."/>
            <person name="Gipson J."/>
            <person name="Zaitshik J."/>
            <person name="Landry C."/>
            <person name="Lawrence M.L."/>
        </authorList>
    </citation>
    <scope>NUCLEOTIDE SEQUENCE [LARGE SCALE GENOMIC DNA]</scope>
    <source>
        <strain>93-146</strain>
    </source>
</reference>
<evidence type="ECO:0000255" key="1">
    <source>
        <dbReference type="HAMAP-Rule" id="MF_00189"/>
    </source>
</evidence>
<organism>
    <name type="scientific">Edwardsiella ictaluri (strain 93-146)</name>
    <dbReference type="NCBI Taxonomy" id="634503"/>
    <lineage>
        <taxon>Bacteria</taxon>
        <taxon>Pseudomonadati</taxon>
        <taxon>Pseudomonadota</taxon>
        <taxon>Gammaproteobacteria</taxon>
        <taxon>Enterobacterales</taxon>
        <taxon>Hafniaceae</taxon>
        <taxon>Edwardsiella</taxon>
    </lineage>
</organism>
<accession>C5BDB0</accession>